<sequence>MFSFRKFLAFMLIVIALMASFSSAQPIDEERPIFMERREASAFGDIIGELKGKGLGGRMRFGKRSSSPSDISMAELRAIYGGGPVEYVQL</sequence>
<accession>A8WU84</accession>
<organism>
    <name type="scientific">Caenorhabditis briggsae</name>
    <dbReference type="NCBI Taxonomy" id="6238"/>
    <lineage>
        <taxon>Eukaryota</taxon>
        <taxon>Metazoa</taxon>
        <taxon>Ecdysozoa</taxon>
        <taxon>Nematoda</taxon>
        <taxon>Chromadorea</taxon>
        <taxon>Rhabditida</taxon>
        <taxon>Rhabditina</taxon>
        <taxon>Rhabditomorpha</taxon>
        <taxon>Rhabditoidea</taxon>
        <taxon>Rhabditidae</taxon>
        <taxon>Peloderinae</taxon>
        <taxon>Caenorhabditis</taxon>
    </lineage>
</organism>
<comment type="function">
    <text evidence="3">FMRFamides and FMRFamide-like peptides are neuropeptides.</text>
</comment>
<comment type="subcellular location">
    <subcellularLocation>
        <location evidence="3">Secreted</location>
    </subcellularLocation>
</comment>
<comment type="similarity">
    <text evidence="3">Belongs to the FARP (FMRFamide related peptide) family.</text>
</comment>
<evidence type="ECO:0000250" key="1">
    <source>
        <dbReference type="UniProtKB" id="Q18184"/>
    </source>
</evidence>
<evidence type="ECO:0000255" key="2"/>
<evidence type="ECO:0000305" key="3"/>
<evidence type="ECO:0000312" key="4">
    <source>
        <dbReference type="EMBL" id="CAP24046.1"/>
    </source>
</evidence>
<reference evidence="4" key="1">
    <citation type="journal article" date="2003" name="PLoS Biol.">
        <title>The genome sequence of Caenorhabditis briggsae: a platform for comparative genomics.</title>
        <authorList>
            <person name="Stein L.D."/>
            <person name="Bao Z."/>
            <person name="Blasiar D."/>
            <person name="Blumenthal T."/>
            <person name="Brent M.R."/>
            <person name="Chen N."/>
            <person name="Chinwalla A."/>
            <person name="Clarke L."/>
            <person name="Clee C."/>
            <person name="Coghlan A."/>
            <person name="Coulson A."/>
            <person name="D'Eustachio P."/>
            <person name="Fitch D.H.A."/>
            <person name="Fulton L.A."/>
            <person name="Fulton R.E."/>
            <person name="Griffiths-Jones S."/>
            <person name="Harris T.W."/>
            <person name="Hillier L.W."/>
            <person name="Kamath R."/>
            <person name="Kuwabara P.E."/>
            <person name="Mardis E.R."/>
            <person name="Marra M.A."/>
            <person name="Miner T.L."/>
            <person name="Minx P."/>
            <person name="Mullikin J.C."/>
            <person name="Plumb R.W."/>
            <person name="Rogers J."/>
            <person name="Schein J.E."/>
            <person name="Sohrmann M."/>
            <person name="Spieth J."/>
            <person name="Stajich J.E."/>
            <person name="Wei C."/>
            <person name="Willey D."/>
            <person name="Wilson R.K."/>
            <person name="Durbin R.M."/>
            <person name="Waterston R.H."/>
        </authorList>
    </citation>
    <scope>NUCLEOTIDE SEQUENCE [LARGE SCALE GENOMIC DNA]</scope>
    <source>
        <strain evidence="4">AF16</strain>
    </source>
</reference>
<feature type="signal peptide" evidence="2">
    <location>
        <begin position="1"/>
        <end position="24"/>
    </location>
</feature>
<feature type="propeptide" id="PRO_0000392437" evidence="1">
    <location>
        <begin position="25"/>
        <end position="36"/>
    </location>
</feature>
<feature type="peptide" id="PRO_0000392438" description="EASAFGDIIGELKGKGLGGRMRF-amide" evidence="1">
    <location>
        <begin position="39"/>
        <end position="61"/>
    </location>
</feature>
<feature type="propeptide" id="PRO_0000392439" evidence="1">
    <location>
        <begin position="65"/>
        <end position="90"/>
    </location>
</feature>
<feature type="modified residue" description="Phenylalanine amide" evidence="1">
    <location>
        <position position="61"/>
    </location>
</feature>
<proteinExistence type="inferred from homology"/>
<name>FLP27_CAEBR</name>
<dbReference type="EMBL" id="HE601438">
    <property type="protein sequence ID" value="CAP24046.1"/>
    <property type="molecule type" value="Genomic_DNA"/>
</dbReference>
<dbReference type="FunCoup" id="A8WU84">
    <property type="interactions" value="129"/>
</dbReference>
<dbReference type="STRING" id="6238.A8WU84"/>
<dbReference type="EnsemblMetazoa" id="CBG02476.1">
    <property type="protein sequence ID" value="CBG02476.1"/>
    <property type="gene ID" value="WBGene00025523"/>
</dbReference>
<dbReference type="KEGG" id="cbr:CBG_02476"/>
<dbReference type="CTD" id="8572296"/>
<dbReference type="WormBase" id="CBG02476">
    <property type="protein sequence ID" value="CBP06272"/>
    <property type="gene ID" value="WBGene00025523"/>
    <property type="gene designation" value="Cbr-flp-27"/>
</dbReference>
<dbReference type="eggNOG" id="ENOG502TIKP">
    <property type="taxonomic scope" value="Eukaryota"/>
</dbReference>
<dbReference type="HOGENOM" id="CLU_2471202_0_0_1"/>
<dbReference type="InParanoid" id="A8WU84"/>
<dbReference type="OMA" id="PVEYVQL"/>
<dbReference type="OrthoDB" id="5840533at2759"/>
<dbReference type="Proteomes" id="UP000008549">
    <property type="component" value="Unassembled WGS sequence"/>
</dbReference>
<dbReference type="GO" id="GO:0005576">
    <property type="term" value="C:extracellular region"/>
    <property type="evidence" value="ECO:0007669"/>
    <property type="project" value="UniProtKB-SubCell"/>
</dbReference>
<dbReference type="GO" id="GO:0007218">
    <property type="term" value="P:neuropeptide signaling pathway"/>
    <property type="evidence" value="ECO:0007669"/>
    <property type="project" value="UniProtKB-KW"/>
</dbReference>
<protein>
    <recommendedName>
        <fullName evidence="1">FMRFamide-like neuropeptides 27</fullName>
    </recommendedName>
    <component>
        <recommendedName>
            <fullName evidence="1">EASAFGDIIGELKGKGLGGRMRF-amide</fullName>
        </recommendedName>
    </component>
</protein>
<keyword id="KW-0027">Amidation</keyword>
<keyword id="KW-0165">Cleavage on pair of basic residues</keyword>
<keyword id="KW-0527">Neuropeptide</keyword>
<keyword id="KW-1185">Reference proteome</keyword>
<keyword id="KW-0964">Secreted</keyword>
<keyword id="KW-0732">Signal</keyword>
<gene>
    <name evidence="4" type="primary">flp-27</name>
    <name type="ORF">CBG02476</name>
</gene>